<gene>
    <name evidence="2" type="primary">rpsL</name>
    <name type="ordered locus">Tgr7_2329</name>
</gene>
<reference key="1">
    <citation type="journal article" date="2011" name="Stand. Genomic Sci.">
        <title>Complete genome sequence of 'Thioalkalivibrio sulfidophilus' HL-EbGr7.</title>
        <authorList>
            <person name="Muyzer G."/>
            <person name="Sorokin D.Y."/>
            <person name="Mavromatis K."/>
            <person name="Lapidus A."/>
            <person name="Clum A."/>
            <person name="Ivanova N."/>
            <person name="Pati A."/>
            <person name="d'Haeseleer P."/>
            <person name="Woyke T."/>
            <person name="Kyrpides N.C."/>
        </authorList>
    </citation>
    <scope>NUCLEOTIDE SEQUENCE [LARGE SCALE GENOMIC DNA]</scope>
    <source>
        <strain>HL-EbGR7</strain>
    </source>
</reference>
<evidence type="ECO:0000250" key="1"/>
<evidence type="ECO:0000255" key="2">
    <source>
        <dbReference type="HAMAP-Rule" id="MF_00403"/>
    </source>
</evidence>
<evidence type="ECO:0000256" key="3">
    <source>
        <dbReference type="SAM" id="MobiDB-lite"/>
    </source>
</evidence>
<evidence type="ECO:0000305" key="4"/>
<dbReference type="EMBL" id="CP001339">
    <property type="protein sequence ID" value="ACL73409.1"/>
    <property type="molecule type" value="Genomic_DNA"/>
</dbReference>
<dbReference type="RefSeq" id="WP_012638885.1">
    <property type="nucleotide sequence ID" value="NC_011901.1"/>
</dbReference>
<dbReference type="SMR" id="B8GV63"/>
<dbReference type="STRING" id="396588.Tgr7_2329"/>
<dbReference type="KEGG" id="tgr:Tgr7_2329"/>
<dbReference type="eggNOG" id="COG0048">
    <property type="taxonomic scope" value="Bacteria"/>
</dbReference>
<dbReference type="HOGENOM" id="CLU_104295_1_2_6"/>
<dbReference type="OrthoDB" id="9802366at2"/>
<dbReference type="Proteomes" id="UP000002383">
    <property type="component" value="Chromosome"/>
</dbReference>
<dbReference type="GO" id="GO:0015935">
    <property type="term" value="C:small ribosomal subunit"/>
    <property type="evidence" value="ECO:0007669"/>
    <property type="project" value="InterPro"/>
</dbReference>
<dbReference type="GO" id="GO:0019843">
    <property type="term" value="F:rRNA binding"/>
    <property type="evidence" value="ECO:0007669"/>
    <property type="project" value="UniProtKB-UniRule"/>
</dbReference>
<dbReference type="GO" id="GO:0003735">
    <property type="term" value="F:structural constituent of ribosome"/>
    <property type="evidence" value="ECO:0007669"/>
    <property type="project" value="InterPro"/>
</dbReference>
<dbReference type="GO" id="GO:0000049">
    <property type="term" value="F:tRNA binding"/>
    <property type="evidence" value="ECO:0007669"/>
    <property type="project" value="UniProtKB-UniRule"/>
</dbReference>
<dbReference type="GO" id="GO:0006412">
    <property type="term" value="P:translation"/>
    <property type="evidence" value="ECO:0007669"/>
    <property type="project" value="UniProtKB-UniRule"/>
</dbReference>
<dbReference type="CDD" id="cd03368">
    <property type="entry name" value="Ribosomal_S12"/>
    <property type="match status" value="1"/>
</dbReference>
<dbReference type="FunFam" id="2.40.50.140:FF:000001">
    <property type="entry name" value="30S ribosomal protein S12"/>
    <property type="match status" value="1"/>
</dbReference>
<dbReference type="Gene3D" id="2.40.50.140">
    <property type="entry name" value="Nucleic acid-binding proteins"/>
    <property type="match status" value="1"/>
</dbReference>
<dbReference type="HAMAP" id="MF_00403_B">
    <property type="entry name" value="Ribosomal_uS12_B"/>
    <property type="match status" value="1"/>
</dbReference>
<dbReference type="InterPro" id="IPR012340">
    <property type="entry name" value="NA-bd_OB-fold"/>
</dbReference>
<dbReference type="InterPro" id="IPR006032">
    <property type="entry name" value="Ribosomal_uS12"/>
</dbReference>
<dbReference type="InterPro" id="IPR005679">
    <property type="entry name" value="Ribosomal_uS12_bac"/>
</dbReference>
<dbReference type="NCBIfam" id="TIGR00981">
    <property type="entry name" value="rpsL_bact"/>
    <property type="match status" value="1"/>
</dbReference>
<dbReference type="PANTHER" id="PTHR11652">
    <property type="entry name" value="30S RIBOSOMAL PROTEIN S12 FAMILY MEMBER"/>
    <property type="match status" value="1"/>
</dbReference>
<dbReference type="Pfam" id="PF00164">
    <property type="entry name" value="Ribosom_S12_S23"/>
    <property type="match status" value="1"/>
</dbReference>
<dbReference type="PIRSF" id="PIRSF002133">
    <property type="entry name" value="Ribosomal_S12/S23"/>
    <property type="match status" value="1"/>
</dbReference>
<dbReference type="PRINTS" id="PR01034">
    <property type="entry name" value="RIBOSOMALS12"/>
</dbReference>
<dbReference type="SUPFAM" id="SSF50249">
    <property type="entry name" value="Nucleic acid-binding proteins"/>
    <property type="match status" value="1"/>
</dbReference>
<dbReference type="PROSITE" id="PS00055">
    <property type="entry name" value="RIBOSOMAL_S12"/>
    <property type="match status" value="1"/>
</dbReference>
<feature type="chain" id="PRO_1000194221" description="Small ribosomal subunit protein uS12">
    <location>
        <begin position="1"/>
        <end position="125"/>
    </location>
</feature>
<feature type="region of interest" description="Disordered" evidence="3">
    <location>
        <begin position="100"/>
        <end position="125"/>
    </location>
</feature>
<feature type="compositionally biased region" description="Basic residues" evidence="3">
    <location>
        <begin position="111"/>
        <end position="125"/>
    </location>
</feature>
<feature type="modified residue" description="3-methylthioaspartic acid" evidence="1">
    <location>
        <position position="89"/>
    </location>
</feature>
<protein>
    <recommendedName>
        <fullName evidence="2">Small ribosomal subunit protein uS12</fullName>
    </recommendedName>
    <alternativeName>
        <fullName evidence="4">30S ribosomal protein S12</fullName>
    </alternativeName>
</protein>
<name>RS12_THISH</name>
<sequence>MATINQLVRKPRKRKVEKSAVPALQACPQRRGVCTRVYTTTPKKPNSALRKVARVRLTNGYEVSSYIGGEGHNLQEHSVVLIRGGRVKDLPGVRYHTVRGSLDTQGVQNRKQARSKYGAKRPKKA</sequence>
<proteinExistence type="inferred from homology"/>
<keyword id="KW-0488">Methylation</keyword>
<keyword id="KW-1185">Reference proteome</keyword>
<keyword id="KW-0687">Ribonucleoprotein</keyword>
<keyword id="KW-0689">Ribosomal protein</keyword>
<keyword id="KW-0694">RNA-binding</keyword>
<keyword id="KW-0699">rRNA-binding</keyword>
<keyword id="KW-0820">tRNA-binding</keyword>
<comment type="function">
    <text evidence="2">With S4 and S5 plays an important role in translational accuracy.</text>
</comment>
<comment type="function">
    <text evidence="2">Interacts with and stabilizes bases of the 16S rRNA that are involved in tRNA selection in the A site and with the mRNA backbone. Located at the interface of the 30S and 50S subunits, it traverses the body of the 30S subunit contacting proteins on the other side and probably holding the rRNA structure together. The combined cluster of proteins S8, S12 and S17 appears to hold together the shoulder and platform of the 30S subunit.</text>
</comment>
<comment type="subunit">
    <text evidence="2">Part of the 30S ribosomal subunit. Contacts proteins S8 and S17. May interact with IF1 in the 30S initiation complex.</text>
</comment>
<comment type="similarity">
    <text evidence="2">Belongs to the universal ribosomal protein uS12 family.</text>
</comment>
<accession>B8GV63</accession>
<organism>
    <name type="scientific">Thioalkalivibrio sulfidiphilus (strain HL-EbGR7)</name>
    <dbReference type="NCBI Taxonomy" id="396588"/>
    <lineage>
        <taxon>Bacteria</taxon>
        <taxon>Pseudomonadati</taxon>
        <taxon>Pseudomonadota</taxon>
        <taxon>Gammaproteobacteria</taxon>
        <taxon>Chromatiales</taxon>
        <taxon>Ectothiorhodospiraceae</taxon>
        <taxon>Thioalkalivibrio</taxon>
    </lineage>
</organism>